<gene>
    <name evidence="1" type="primary">gmhA</name>
    <name type="ordered locus">DvMF_0582</name>
</gene>
<dbReference type="EC" id="5.3.1.28" evidence="1"/>
<dbReference type="EMBL" id="CP001197">
    <property type="protein sequence ID" value="ACL07539.1"/>
    <property type="molecule type" value="Genomic_DNA"/>
</dbReference>
<dbReference type="SMR" id="B8DKW0"/>
<dbReference type="STRING" id="883.DvMF_0582"/>
<dbReference type="KEGG" id="dvm:DvMF_0582"/>
<dbReference type="eggNOG" id="COG0279">
    <property type="taxonomic scope" value="Bacteria"/>
</dbReference>
<dbReference type="HOGENOM" id="CLU_080999_3_0_7"/>
<dbReference type="OrthoDB" id="9810929at2"/>
<dbReference type="UniPathway" id="UPA00041">
    <property type="reaction ID" value="UER00436"/>
</dbReference>
<dbReference type="GO" id="GO:0005737">
    <property type="term" value="C:cytoplasm"/>
    <property type="evidence" value="ECO:0007669"/>
    <property type="project" value="UniProtKB-SubCell"/>
</dbReference>
<dbReference type="GO" id="GO:0097367">
    <property type="term" value="F:carbohydrate derivative binding"/>
    <property type="evidence" value="ECO:0007669"/>
    <property type="project" value="InterPro"/>
</dbReference>
<dbReference type="GO" id="GO:0008968">
    <property type="term" value="F:D-sedoheptulose 7-phosphate isomerase activity"/>
    <property type="evidence" value="ECO:0007669"/>
    <property type="project" value="UniProtKB-UniRule"/>
</dbReference>
<dbReference type="GO" id="GO:0008270">
    <property type="term" value="F:zinc ion binding"/>
    <property type="evidence" value="ECO:0007669"/>
    <property type="project" value="UniProtKB-UniRule"/>
</dbReference>
<dbReference type="GO" id="GO:0005975">
    <property type="term" value="P:carbohydrate metabolic process"/>
    <property type="evidence" value="ECO:0007669"/>
    <property type="project" value="UniProtKB-UniRule"/>
</dbReference>
<dbReference type="GO" id="GO:2001061">
    <property type="term" value="P:D-glycero-D-manno-heptose 7-phosphate biosynthetic process"/>
    <property type="evidence" value="ECO:0007669"/>
    <property type="project" value="UniProtKB-UniPathway"/>
</dbReference>
<dbReference type="CDD" id="cd05006">
    <property type="entry name" value="SIS_GmhA"/>
    <property type="match status" value="1"/>
</dbReference>
<dbReference type="Gene3D" id="3.40.50.10490">
    <property type="entry name" value="Glucose-6-phosphate isomerase like protein, domain 1"/>
    <property type="match status" value="1"/>
</dbReference>
<dbReference type="HAMAP" id="MF_00067">
    <property type="entry name" value="GmhA"/>
    <property type="match status" value="1"/>
</dbReference>
<dbReference type="InterPro" id="IPR035461">
    <property type="entry name" value="GmhA/DiaA"/>
</dbReference>
<dbReference type="InterPro" id="IPR004515">
    <property type="entry name" value="Phosphoheptose_Isoase"/>
</dbReference>
<dbReference type="InterPro" id="IPR001347">
    <property type="entry name" value="SIS_dom"/>
</dbReference>
<dbReference type="InterPro" id="IPR046348">
    <property type="entry name" value="SIS_dom_sf"/>
</dbReference>
<dbReference type="InterPro" id="IPR050099">
    <property type="entry name" value="SIS_GmhA/DiaA_subfam"/>
</dbReference>
<dbReference type="PANTHER" id="PTHR30390:SF6">
    <property type="entry name" value="DNAA INITIATOR-ASSOCIATING PROTEIN DIAA"/>
    <property type="match status" value="1"/>
</dbReference>
<dbReference type="PANTHER" id="PTHR30390">
    <property type="entry name" value="SEDOHEPTULOSE 7-PHOSPHATE ISOMERASE / DNAA INITIATOR-ASSOCIATING FACTOR FOR REPLICATION INITIATION"/>
    <property type="match status" value="1"/>
</dbReference>
<dbReference type="Pfam" id="PF13580">
    <property type="entry name" value="SIS_2"/>
    <property type="match status" value="1"/>
</dbReference>
<dbReference type="SUPFAM" id="SSF53697">
    <property type="entry name" value="SIS domain"/>
    <property type="match status" value="1"/>
</dbReference>
<dbReference type="PROSITE" id="PS51464">
    <property type="entry name" value="SIS"/>
    <property type="match status" value="1"/>
</dbReference>
<protein>
    <recommendedName>
        <fullName evidence="1">Phosphoheptose isomerase</fullName>
        <ecNumber evidence="1">5.3.1.28</ecNumber>
    </recommendedName>
    <alternativeName>
        <fullName evidence="1">Sedoheptulose 7-phosphate isomerase</fullName>
    </alternativeName>
</protein>
<proteinExistence type="inferred from homology"/>
<evidence type="ECO:0000255" key="1">
    <source>
        <dbReference type="HAMAP-Rule" id="MF_00067"/>
    </source>
</evidence>
<comment type="function">
    <text evidence="1">Catalyzes the isomerization of sedoheptulose 7-phosphate in D-glycero-D-manno-heptose 7-phosphate.</text>
</comment>
<comment type="catalytic activity">
    <reaction evidence="1">
        <text>2 D-sedoheptulose 7-phosphate = D-glycero-alpha-D-manno-heptose 7-phosphate + D-glycero-beta-D-manno-heptose 7-phosphate</text>
        <dbReference type="Rhea" id="RHEA:27489"/>
        <dbReference type="ChEBI" id="CHEBI:57483"/>
        <dbReference type="ChEBI" id="CHEBI:60203"/>
        <dbReference type="ChEBI" id="CHEBI:60204"/>
        <dbReference type="EC" id="5.3.1.28"/>
    </reaction>
</comment>
<comment type="cofactor">
    <cofactor evidence="1">
        <name>Zn(2+)</name>
        <dbReference type="ChEBI" id="CHEBI:29105"/>
    </cofactor>
    <text evidence="1">Binds 1 zinc ion per subunit.</text>
</comment>
<comment type="pathway">
    <text evidence="1">Carbohydrate biosynthesis; D-glycero-D-manno-heptose 7-phosphate biosynthesis; D-glycero-alpha-D-manno-heptose 7-phosphate and D-glycero-beta-D-manno-heptose 7-phosphate from sedoheptulose 7-phosphate: step 1/1.</text>
</comment>
<comment type="subunit">
    <text evidence="1">Homotetramer.</text>
</comment>
<comment type="subcellular location">
    <subcellularLocation>
        <location evidence="1">Cytoplasm</location>
    </subcellularLocation>
</comment>
<comment type="miscellaneous">
    <text evidence="1">The reaction produces a racemic mixture of D-glycero-alpha-D-manno-heptose 7-phosphate and D-glycero-beta-D-manno-heptose 7-phosphate.</text>
</comment>
<comment type="similarity">
    <text evidence="1">Belongs to the SIS family. GmhA subfamily.</text>
</comment>
<organism>
    <name type="scientific">Nitratidesulfovibrio vulgaris (strain DSM 19637 / Miyazaki F)</name>
    <name type="common">Desulfovibrio vulgaris</name>
    <dbReference type="NCBI Taxonomy" id="883"/>
    <lineage>
        <taxon>Bacteria</taxon>
        <taxon>Pseudomonadati</taxon>
        <taxon>Thermodesulfobacteriota</taxon>
        <taxon>Desulfovibrionia</taxon>
        <taxon>Desulfovibrionales</taxon>
        <taxon>Desulfovibrionaceae</taxon>
        <taxon>Nitratidesulfovibrio</taxon>
    </lineage>
</organism>
<accession>B8DKW0</accession>
<keyword id="KW-0119">Carbohydrate metabolism</keyword>
<keyword id="KW-0963">Cytoplasm</keyword>
<keyword id="KW-0413">Isomerase</keyword>
<keyword id="KW-0479">Metal-binding</keyword>
<keyword id="KW-0862">Zinc</keyword>
<feature type="chain" id="PRO_1000196996" description="Phosphoheptose isomerase">
    <location>
        <begin position="1"/>
        <end position="208"/>
    </location>
</feature>
<feature type="domain" description="SIS" evidence="1">
    <location>
        <begin position="38"/>
        <end position="200"/>
    </location>
</feature>
<feature type="binding site" evidence="1">
    <location>
        <begin position="53"/>
        <end position="55"/>
    </location>
    <ligand>
        <name>substrate</name>
    </ligand>
</feature>
<feature type="binding site" evidence="1">
    <location>
        <position position="62"/>
    </location>
    <ligand>
        <name>Zn(2+)</name>
        <dbReference type="ChEBI" id="CHEBI:29105"/>
    </ligand>
</feature>
<feature type="binding site" evidence="1">
    <location>
        <position position="66"/>
    </location>
    <ligand>
        <name>substrate</name>
    </ligand>
</feature>
<feature type="binding site" evidence="1">
    <location>
        <position position="66"/>
    </location>
    <ligand>
        <name>Zn(2+)</name>
        <dbReference type="ChEBI" id="CHEBI:29105"/>
    </ligand>
</feature>
<feature type="binding site" evidence="1">
    <location>
        <begin position="95"/>
        <end position="96"/>
    </location>
    <ligand>
        <name>substrate</name>
    </ligand>
</feature>
<feature type="binding site" evidence="1">
    <location>
        <begin position="121"/>
        <end position="123"/>
    </location>
    <ligand>
        <name>substrate</name>
    </ligand>
</feature>
<feature type="binding site" evidence="1">
    <location>
        <position position="126"/>
    </location>
    <ligand>
        <name>substrate</name>
    </ligand>
</feature>
<feature type="binding site" evidence="1">
    <location>
        <position position="173"/>
    </location>
    <ligand>
        <name>substrate</name>
    </ligand>
</feature>
<feature type="binding site" evidence="1">
    <location>
        <position position="173"/>
    </location>
    <ligand>
        <name>Zn(2+)</name>
        <dbReference type="ChEBI" id="CHEBI:29105"/>
    </ligand>
</feature>
<feature type="binding site" evidence="1">
    <location>
        <position position="181"/>
    </location>
    <ligand>
        <name>Zn(2+)</name>
        <dbReference type="ChEBI" id="CHEBI:29105"/>
    </ligand>
</feature>
<reference key="1">
    <citation type="submission" date="2008-10" db="EMBL/GenBank/DDBJ databases">
        <title>Complete sequence of Desulfovibrio vulgaris str. 'Miyazaki F'.</title>
        <authorList>
            <person name="Lucas S."/>
            <person name="Copeland A."/>
            <person name="Lapidus A."/>
            <person name="Glavina del Rio T."/>
            <person name="Dalin E."/>
            <person name="Tice H."/>
            <person name="Bruce D."/>
            <person name="Goodwin L."/>
            <person name="Pitluck S."/>
            <person name="Sims D."/>
            <person name="Brettin T."/>
            <person name="Detter J.C."/>
            <person name="Han C."/>
            <person name="Larimer F."/>
            <person name="Land M."/>
            <person name="Hauser L."/>
            <person name="Kyrpides N."/>
            <person name="Mikhailova N."/>
            <person name="Hazen T.C."/>
            <person name="Richardson P."/>
        </authorList>
    </citation>
    <scope>NUCLEOTIDE SEQUENCE [LARGE SCALE GENOMIC DNA]</scope>
    <source>
        <strain>DSM 19637 / Miyazaki F</strain>
    </source>
</reference>
<sequence>MTDNARQIVLEHATEGAKLRERYFQQNADRVVELALQMALTLARGRKIMFCGNGGSAADAQHLAAEFVNRFMMERPPLPALALTTDSSILTAIGNDYGFEQVFQKQVQALGQPGDMLVGISTSGNSPNVVLALKAAREKGVTTVGMTGRGGGEMAALCDYLLDVSDRRTPLVQEIHITVGHLLCQLTDHFLFENVLALQPYLEGKAPE</sequence>
<name>GMHA_NITV9</name>